<gene>
    <name evidence="1" type="primary">atpC</name>
    <name evidence="3" type="synonym">ahaC</name>
    <name type="ordered locus">MM_0782</name>
</gene>
<proteinExistence type="evidence at protein level"/>
<protein>
    <recommendedName>
        <fullName evidence="1">A-type ATP synthase subunit C</fullName>
    </recommendedName>
    <alternativeName>
        <fullName evidence="3">A1A0 ATPase subunit C</fullName>
    </alternativeName>
</protein>
<accession>Q60184</accession>
<reference key="1">
    <citation type="journal article" date="1996" name="J. Biol. Chem.">
        <title>Subunit structure and organization of the genes of the A1A0 ATPase from the Archaeon Methanosarcina mazei Go1.</title>
        <authorList>
            <person name="Wilms R."/>
            <person name="Freiberg C."/>
            <person name="Wegerle E."/>
            <person name="Meier I."/>
            <person name="Mayer F."/>
            <person name="Mueller V."/>
        </authorList>
    </citation>
    <scope>NUCLEOTIDE SEQUENCE [GENOMIC DNA]</scope>
    <scope>FUNCTION</scope>
    <scope>BIOPHYSICOCHEMICAL PROPERTIES</scope>
    <scope>SUBUNIT</scope>
    <scope>SUBCELLULAR LOCATION</scope>
    <source>
        <strain>ATCC BAA-159 / DSM 3647 / Goe1 / Go1 / JCM 11833 / OCM 88</strain>
    </source>
</reference>
<reference key="2">
    <citation type="journal article" date="2002" name="J. Mol. Microbiol. Biotechnol.">
        <title>The genome of Methanosarcina mazei: evidence for lateral gene transfer between Bacteria and Archaea.</title>
        <authorList>
            <person name="Deppenmeier U."/>
            <person name="Johann A."/>
            <person name="Hartsch T."/>
            <person name="Merkl R."/>
            <person name="Schmitz R.A."/>
            <person name="Martinez-Arias R."/>
            <person name="Henne A."/>
            <person name="Wiezer A."/>
            <person name="Baeumer S."/>
            <person name="Jacobi C."/>
            <person name="Brueggemann H."/>
            <person name="Lienard T."/>
            <person name="Christmann A."/>
            <person name="Boemecke M."/>
            <person name="Steckel S."/>
            <person name="Bhattacharyya A."/>
            <person name="Lykidis A."/>
            <person name="Overbeek R."/>
            <person name="Klenk H.-P."/>
            <person name="Gunsalus R.P."/>
            <person name="Fritz H.-J."/>
            <person name="Gottschalk G."/>
        </authorList>
    </citation>
    <scope>NUCLEOTIDE SEQUENCE [LARGE SCALE GENOMIC DNA]</scope>
    <source>
        <strain>ATCC BAA-159 / DSM 3647 / Goe1 / Go1 / JCM 11833 / OCM 88</strain>
    </source>
</reference>
<organism>
    <name type="scientific">Methanosarcina mazei (strain ATCC BAA-159 / DSM 3647 / Goe1 / Go1 / JCM 11833 / OCM 88)</name>
    <name type="common">Methanosarcina frisia</name>
    <dbReference type="NCBI Taxonomy" id="192952"/>
    <lineage>
        <taxon>Archaea</taxon>
        <taxon>Methanobacteriati</taxon>
        <taxon>Methanobacteriota</taxon>
        <taxon>Stenosarchaea group</taxon>
        <taxon>Methanomicrobia</taxon>
        <taxon>Methanosarcinales</taxon>
        <taxon>Methanosarcinaceae</taxon>
        <taxon>Methanosarcina</taxon>
    </lineage>
</organism>
<dbReference type="EMBL" id="U47274">
    <property type="protein sequence ID" value="AAC06373.1"/>
    <property type="molecule type" value="Genomic_DNA"/>
</dbReference>
<dbReference type="EMBL" id="AE008384">
    <property type="protein sequence ID" value="AAM30478.1"/>
    <property type="molecule type" value="Genomic_DNA"/>
</dbReference>
<dbReference type="PIR" id="T45105">
    <property type="entry name" value="T45105"/>
</dbReference>
<dbReference type="RefSeq" id="WP_011032732.1">
    <property type="nucleotide sequence ID" value="NC_003901.1"/>
</dbReference>
<dbReference type="SMR" id="Q60184"/>
<dbReference type="TCDB" id="3.A.2.3.1">
    <property type="family name" value="the h+- or na+-translocating f-type, v-type and a-type atpase (f-atpase) superfamily"/>
</dbReference>
<dbReference type="KEGG" id="mma:MM_0782"/>
<dbReference type="PATRIC" id="fig|192952.21.peg.930"/>
<dbReference type="eggNOG" id="arCOG02459">
    <property type="taxonomic scope" value="Archaea"/>
</dbReference>
<dbReference type="HOGENOM" id="CLU_059311_0_1_2"/>
<dbReference type="Proteomes" id="UP000000595">
    <property type="component" value="Chromosome"/>
</dbReference>
<dbReference type="GO" id="GO:0005886">
    <property type="term" value="C:plasma membrane"/>
    <property type="evidence" value="ECO:0007669"/>
    <property type="project" value="UniProtKB-SubCell"/>
</dbReference>
<dbReference type="GO" id="GO:0033179">
    <property type="term" value="C:proton-transporting V-type ATPase, V0 domain"/>
    <property type="evidence" value="ECO:0007669"/>
    <property type="project" value="InterPro"/>
</dbReference>
<dbReference type="GO" id="GO:0005524">
    <property type="term" value="F:ATP binding"/>
    <property type="evidence" value="ECO:0007669"/>
    <property type="project" value="UniProtKB-UniRule"/>
</dbReference>
<dbReference type="GO" id="GO:0046933">
    <property type="term" value="F:proton-transporting ATP synthase activity, rotational mechanism"/>
    <property type="evidence" value="ECO:0007669"/>
    <property type="project" value="UniProtKB-UniRule"/>
</dbReference>
<dbReference type="GO" id="GO:0046961">
    <property type="term" value="F:proton-transporting ATPase activity, rotational mechanism"/>
    <property type="evidence" value="ECO:0007669"/>
    <property type="project" value="InterPro"/>
</dbReference>
<dbReference type="GO" id="GO:0042777">
    <property type="term" value="P:proton motive force-driven plasma membrane ATP synthesis"/>
    <property type="evidence" value="ECO:0007669"/>
    <property type="project" value="UniProtKB-UniRule"/>
</dbReference>
<dbReference type="Gene3D" id="1.10.132.50">
    <property type="entry name" value="ATP synthase (C/AC39) subunit, domain 3"/>
    <property type="match status" value="1"/>
</dbReference>
<dbReference type="Gene3D" id="1.20.1690.10">
    <property type="entry name" value="V-type ATP synthase subunit C domain"/>
    <property type="match status" value="2"/>
</dbReference>
<dbReference type="HAMAP" id="MF_00314">
    <property type="entry name" value="ATP_synth_C_arch"/>
    <property type="match status" value="1"/>
</dbReference>
<dbReference type="InterPro" id="IPR036079">
    <property type="entry name" value="ATPase_csu/dsu_sf"/>
</dbReference>
<dbReference type="InterPro" id="IPR014272">
    <property type="entry name" value="ATPase_V0-cplx_csu"/>
</dbReference>
<dbReference type="InterPro" id="IPR002843">
    <property type="entry name" value="ATPase_V0-cplx_csu/dsu"/>
</dbReference>
<dbReference type="InterPro" id="IPR050873">
    <property type="entry name" value="V-ATPase_V0D/AC39_subunit"/>
</dbReference>
<dbReference type="InterPro" id="IPR035067">
    <property type="entry name" value="V-type_ATPase_csu/dsu"/>
</dbReference>
<dbReference type="InterPro" id="IPR044911">
    <property type="entry name" value="V-type_ATPase_csu/dsu_dom_3"/>
</dbReference>
<dbReference type="NCBIfam" id="TIGR02923">
    <property type="entry name" value="AhaC"/>
    <property type="match status" value="1"/>
</dbReference>
<dbReference type="NCBIfam" id="NF002268">
    <property type="entry name" value="PRK01198.1-4"/>
    <property type="match status" value="1"/>
</dbReference>
<dbReference type="PANTHER" id="PTHR38682">
    <property type="entry name" value="V-TYPE ATP SYNTHASE SUBUNIT C"/>
    <property type="match status" value="1"/>
</dbReference>
<dbReference type="PANTHER" id="PTHR38682:SF1">
    <property type="entry name" value="V-TYPE ATP SYNTHASE SUBUNIT C"/>
    <property type="match status" value="1"/>
</dbReference>
<dbReference type="Pfam" id="PF01992">
    <property type="entry name" value="vATP-synt_AC39"/>
    <property type="match status" value="1"/>
</dbReference>
<dbReference type="SUPFAM" id="SSF103486">
    <property type="entry name" value="V-type ATP synthase subunit C"/>
    <property type="match status" value="1"/>
</dbReference>
<comment type="function">
    <text evidence="1 4">Component of the A-type ATP synthase that produces ATP from ADP in the presence of a proton gradient across the membrane.</text>
</comment>
<comment type="biophysicochemical properties">
    <phDependence>
        <text evidence="2">Optimum pH is 5.2 for ATP hydrolysis.</text>
    </phDependence>
</comment>
<comment type="subunit">
    <text evidence="2">Has multiple subunits, A(3), B(3), C, D, E, F, G, I and K(x); there may be a few other subunits as well.</text>
</comment>
<comment type="subcellular location">
    <subcellularLocation>
        <location evidence="1 2">Cell membrane</location>
        <topology evidence="1 4">Peripheral membrane protein</topology>
    </subcellularLocation>
</comment>
<comment type="miscellaneous">
    <text evidence="4">This organism has both a Na(+)-translocating F1F0 ATP synthase and this H(+)-translocating A1A0 ATP synthase.</text>
</comment>
<comment type="similarity">
    <text evidence="1">Belongs to the V-ATPase V0D/AC39 subunit family.</text>
</comment>
<sequence>MRLLENLWGKKPSRKSDKKKKGSSNYAYAVTRVRAMKSKLLPKESYPRLLNMGIDEITRFIQESEYKNDVDELAMKYSGGDLAEHALNRNLALTYDKLVRITSGELNYLIVAYLKRYDIWNIKTLLRGKIYNASVEDILESLIAAGEFTYTSMSELAAKATYQEIVEALKHTEYYPLLQKFDGTNLAYIENELDKIYYADLFEAIGKPRSKDRKLFAQVVRLEVDVKNLINLFRLKKAGVMQPDEIMPLMIEGGLELKIEKLAALPYDEFVNELQRTQYWEAISGVVGPDMISLTTLESRLTRYYLESSTILSHVSPITVVPILDYIIHKNNEATNLRIIFRGKETGLSDELIKDQLVII</sequence>
<feature type="chain" id="PRO_0000119367" description="A-type ATP synthase subunit C">
    <location>
        <begin position="1"/>
        <end position="360"/>
    </location>
</feature>
<keyword id="KW-0066">ATP synthesis</keyword>
<keyword id="KW-1003">Cell membrane</keyword>
<keyword id="KW-0375">Hydrogen ion transport</keyword>
<keyword id="KW-0406">Ion transport</keyword>
<keyword id="KW-0472">Membrane</keyword>
<keyword id="KW-0813">Transport</keyword>
<evidence type="ECO:0000255" key="1">
    <source>
        <dbReference type="HAMAP-Rule" id="MF_00314"/>
    </source>
</evidence>
<evidence type="ECO:0000269" key="2">
    <source>
    </source>
</evidence>
<evidence type="ECO:0000303" key="3">
    <source>
    </source>
</evidence>
<evidence type="ECO:0000305" key="4">
    <source>
    </source>
</evidence>
<name>AATC_METMA</name>